<comment type="similarity">
    <text evidence="1">Belongs to the SfsA family.</text>
</comment>
<gene>
    <name evidence="1" type="primary">sfsA</name>
    <name type="ordered locus">Sde_3371</name>
</gene>
<evidence type="ECO:0000255" key="1">
    <source>
        <dbReference type="HAMAP-Rule" id="MF_00095"/>
    </source>
</evidence>
<reference key="1">
    <citation type="journal article" date="2008" name="PLoS Genet.">
        <title>Complete genome sequence of the complex carbohydrate-degrading marine bacterium, Saccharophagus degradans strain 2-40 T.</title>
        <authorList>
            <person name="Weiner R.M."/>
            <person name="Taylor L.E. II"/>
            <person name="Henrissat B."/>
            <person name="Hauser L."/>
            <person name="Land M."/>
            <person name="Coutinho P.M."/>
            <person name="Rancurel C."/>
            <person name="Saunders E.H."/>
            <person name="Longmire A.G."/>
            <person name="Zhang H."/>
            <person name="Bayer E.A."/>
            <person name="Gilbert H.J."/>
            <person name="Larimer F."/>
            <person name="Zhulin I.B."/>
            <person name="Ekborg N.A."/>
            <person name="Lamed R."/>
            <person name="Richardson P.M."/>
            <person name="Borovok I."/>
            <person name="Hutcheson S."/>
        </authorList>
    </citation>
    <scope>NUCLEOTIDE SEQUENCE [LARGE SCALE GENOMIC DNA]</scope>
    <source>
        <strain>2-40 / ATCC 43961 / DSM 17024</strain>
    </source>
</reference>
<protein>
    <recommendedName>
        <fullName evidence="1">Sugar fermentation stimulation protein homolog</fullName>
    </recommendedName>
</protein>
<accession>Q21FA3</accession>
<name>SFSA_SACD2</name>
<dbReference type="EMBL" id="CP000282">
    <property type="protein sequence ID" value="ABD82626.1"/>
    <property type="molecule type" value="Genomic_DNA"/>
</dbReference>
<dbReference type="RefSeq" id="WP_011469842.1">
    <property type="nucleotide sequence ID" value="NC_007912.1"/>
</dbReference>
<dbReference type="SMR" id="Q21FA3"/>
<dbReference type="STRING" id="203122.Sde_3371"/>
<dbReference type="GeneID" id="98614988"/>
<dbReference type="KEGG" id="sde:Sde_3371"/>
<dbReference type="eggNOG" id="COG1489">
    <property type="taxonomic scope" value="Bacteria"/>
</dbReference>
<dbReference type="HOGENOM" id="CLU_052299_2_0_6"/>
<dbReference type="OrthoDB" id="9802365at2"/>
<dbReference type="Proteomes" id="UP000001947">
    <property type="component" value="Chromosome"/>
</dbReference>
<dbReference type="GO" id="GO:0003677">
    <property type="term" value="F:DNA binding"/>
    <property type="evidence" value="ECO:0007669"/>
    <property type="project" value="InterPro"/>
</dbReference>
<dbReference type="CDD" id="cd22359">
    <property type="entry name" value="SfsA-like_bacterial"/>
    <property type="match status" value="1"/>
</dbReference>
<dbReference type="FunFam" id="3.40.1350.60:FF:000001">
    <property type="entry name" value="Sugar fermentation stimulation protein A"/>
    <property type="match status" value="1"/>
</dbReference>
<dbReference type="Gene3D" id="2.40.50.580">
    <property type="match status" value="1"/>
</dbReference>
<dbReference type="Gene3D" id="3.40.1350.60">
    <property type="match status" value="1"/>
</dbReference>
<dbReference type="HAMAP" id="MF_00095">
    <property type="entry name" value="SfsA"/>
    <property type="match status" value="1"/>
</dbReference>
<dbReference type="InterPro" id="IPR005224">
    <property type="entry name" value="SfsA"/>
</dbReference>
<dbReference type="InterPro" id="IPR040452">
    <property type="entry name" value="SfsA_C"/>
</dbReference>
<dbReference type="InterPro" id="IPR041465">
    <property type="entry name" value="SfsA_N"/>
</dbReference>
<dbReference type="NCBIfam" id="TIGR00230">
    <property type="entry name" value="sfsA"/>
    <property type="match status" value="1"/>
</dbReference>
<dbReference type="PANTHER" id="PTHR30545">
    <property type="entry name" value="SUGAR FERMENTATION STIMULATION PROTEIN A"/>
    <property type="match status" value="1"/>
</dbReference>
<dbReference type="PANTHER" id="PTHR30545:SF2">
    <property type="entry name" value="SUGAR FERMENTATION STIMULATION PROTEIN A"/>
    <property type="match status" value="1"/>
</dbReference>
<dbReference type="Pfam" id="PF03749">
    <property type="entry name" value="SfsA"/>
    <property type="match status" value="1"/>
</dbReference>
<dbReference type="Pfam" id="PF17746">
    <property type="entry name" value="SfsA_N"/>
    <property type="match status" value="1"/>
</dbReference>
<organism>
    <name type="scientific">Saccharophagus degradans (strain 2-40 / ATCC 43961 / DSM 17024)</name>
    <dbReference type="NCBI Taxonomy" id="203122"/>
    <lineage>
        <taxon>Bacteria</taxon>
        <taxon>Pseudomonadati</taxon>
        <taxon>Pseudomonadota</taxon>
        <taxon>Gammaproteobacteria</taxon>
        <taxon>Cellvibrionales</taxon>
        <taxon>Cellvibrionaceae</taxon>
        <taxon>Saccharophagus</taxon>
    </lineage>
</organism>
<feature type="chain" id="PRO_1000008019" description="Sugar fermentation stimulation protein homolog">
    <location>
        <begin position="1"/>
        <end position="233"/>
    </location>
</feature>
<keyword id="KW-1185">Reference proteome</keyword>
<sequence>MKFEYPLIPATLLRRYKRFLADVELSDGSTITVHCPNTGSMRNCIVENSPCWLLDSANPKRKYRYSLERVTTPTGAVAGINSASANGLVIAAIENGVISELQGYDELAREQRYGDEKSRIDILLSKPEEQCYIEVKSVTLEEGKGEGFFPDAVSTRGQKHLRELMAMRSQGHRAVLFFCVQHSGITKVAAAEHIDPAYAALFKQAVNEGVEVIAYGVDLGIEGSVITKKLKVV</sequence>
<proteinExistence type="inferred from homology"/>